<feature type="chain" id="PRO_0000102621" description="Ribosome-binding factor A">
    <location>
        <begin position="1"/>
        <end position="117"/>
    </location>
</feature>
<evidence type="ECO:0000255" key="1">
    <source>
        <dbReference type="HAMAP-Rule" id="MF_00003"/>
    </source>
</evidence>
<accession>P32731</accession>
<keyword id="KW-0963">Cytoplasm</keyword>
<keyword id="KW-1185">Reference proteome</keyword>
<keyword id="KW-0690">Ribosome biogenesis</keyword>
<protein>
    <recommendedName>
        <fullName evidence="1">Ribosome-binding factor A</fullName>
    </recommendedName>
</protein>
<gene>
    <name evidence="1" type="primary">rbfA</name>
    <name type="synonym">ylxO</name>
    <name type="synonym">ymxE</name>
    <name type="ordered locus">BSU16650</name>
</gene>
<name>RBFA_BACSU</name>
<sequence length="117" mass="13387">MSMRANRVGEQMKKELGDIISRKLKDPRIGFLTVTDVRVSGDLQIAKVYISVLGDEKKREEALKGLAKAKGFIRSEIGSRIRLRKTPEIEFEFDESIDYGNRIETLIHELHSEKPSE</sequence>
<comment type="function">
    <text evidence="1">One of several proteins that assist in the late maturation steps of the functional core of the 30S ribosomal subunit. Associates with free 30S ribosomal subunits (but not with 30S subunits that are part of 70S ribosomes or polysomes). Required for efficient processing of 16S rRNA. May interact with the 5'-terminal helix region of 16S rRNA.</text>
</comment>
<comment type="subunit">
    <text evidence="1">Monomer. Binds 30S ribosomal subunits, but not 50S ribosomal subunits or 70S ribosomes.</text>
</comment>
<comment type="subcellular location">
    <subcellularLocation>
        <location evidence="1">Cytoplasm</location>
    </subcellularLocation>
</comment>
<comment type="similarity">
    <text evidence="1">Belongs to the RbfA family.</text>
</comment>
<reference key="1">
    <citation type="journal article" date="1993" name="J. Bacteriol.">
        <title>Similar organization of the nusA-infB operon in Bacillus subtilis and Escherichia coli.</title>
        <authorList>
            <person name="Shazand K."/>
            <person name="Tucker J."/>
            <person name="Grunberg-Manago M."/>
            <person name="Rabinowitz J.C."/>
            <person name="Leighton T."/>
        </authorList>
    </citation>
    <scope>NUCLEOTIDE SEQUENCE [GENOMIC DNA]</scope>
    <source>
        <strain>168</strain>
    </source>
</reference>
<reference key="2">
    <citation type="journal article" date="1997" name="Nature">
        <title>The complete genome sequence of the Gram-positive bacterium Bacillus subtilis.</title>
        <authorList>
            <person name="Kunst F."/>
            <person name="Ogasawara N."/>
            <person name="Moszer I."/>
            <person name="Albertini A.M."/>
            <person name="Alloni G."/>
            <person name="Azevedo V."/>
            <person name="Bertero M.G."/>
            <person name="Bessieres P."/>
            <person name="Bolotin A."/>
            <person name="Borchert S."/>
            <person name="Borriss R."/>
            <person name="Boursier L."/>
            <person name="Brans A."/>
            <person name="Braun M."/>
            <person name="Brignell S.C."/>
            <person name="Bron S."/>
            <person name="Brouillet S."/>
            <person name="Bruschi C.V."/>
            <person name="Caldwell B."/>
            <person name="Capuano V."/>
            <person name="Carter N.M."/>
            <person name="Choi S.-K."/>
            <person name="Codani J.-J."/>
            <person name="Connerton I.F."/>
            <person name="Cummings N.J."/>
            <person name="Daniel R.A."/>
            <person name="Denizot F."/>
            <person name="Devine K.M."/>
            <person name="Duesterhoeft A."/>
            <person name="Ehrlich S.D."/>
            <person name="Emmerson P.T."/>
            <person name="Entian K.-D."/>
            <person name="Errington J."/>
            <person name="Fabret C."/>
            <person name="Ferrari E."/>
            <person name="Foulger D."/>
            <person name="Fritz C."/>
            <person name="Fujita M."/>
            <person name="Fujita Y."/>
            <person name="Fuma S."/>
            <person name="Galizzi A."/>
            <person name="Galleron N."/>
            <person name="Ghim S.-Y."/>
            <person name="Glaser P."/>
            <person name="Goffeau A."/>
            <person name="Golightly E.J."/>
            <person name="Grandi G."/>
            <person name="Guiseppi G."/>
            <person name="Guy B.J."/>
            <person name="Haga K."/>
            <person name="Haiech J."/>
            <person name="Harwood C.R."/>
            <person name="Henaut A."/>
            <person name="Hilbert H."/>
            <person name="Holsappel S."/>
            <person name="Hosono S."/>
            <person name="Hullo M.-F."/>
            <person name="Itaya M."/>
            <person name="Jones L.-M."/>
            <person name="Joris B."/>
            <person name="Karamata D."/>
            <person name="Kasahara Y."/>
            <person name="Klaerr-Blanchard M."/>
            <person name="Klein C."/>
            <person name="Kobayashi Y."/>
            <person name="Koetter P."/>
            <person name="Koningstein G."/>
            <person name="Krogh S."/>
            <person name="Kumano M."/>
            <person name="Kurita K."/>
            <person name="Lapidus A."/>
            <person name="Lardinois S."/>
            <person name="Lauber J."/>
            <person name="Lazarevic V."/>
            <person name="Lee S.-M."/>
            <person name="Levine A."/>
            <person name="Liu H."/>
            <person name="Masuda S."/>
            <person name="Mauel C."/>
            <person name="Medigue C."/>
            <person name="Medina N."/>
            <person name="Mellado R.P."/>
            <person name="Mizuno M."/>
            <person name="Moestl D."/>
            <person name="Nakai S."/>
            <person name="Noback M."/>
            <person name="Noone D."/>
            <person name="O'Reilly M."/>
            <person name="Ogawa K."/>
            <person name="Ogiwara A."/>
            <person name="Oudega B."/>
            <person name="Park S.-H."/>
            <person name="Parro V."/>
            <person name="Pohl T.M."/>
            <person name="Portetelle D."/>
            <person name="Porwollik S."/>
            <person name="Prescott A.M."/>
            <person name="Presecan E."/>
            <person name="Pujic P."/>
            <person name="Purnelle B."/>
            <person name="Rapoport G."/>
            <person name="Rey M."/>
            <person name="Reynolds S."/>
            <person name="Rieger M."/>
            <person name="Rivolta C."/>
            <person name="Rocha E."/>
            <person name="Roche B."/>
            <person name="Rose M."/>
            <person name="Sadaie Y."/>
            <person name="Sato T."/>
            <person name="Scanlan E."/>
            <person name="Schleich S."/>
            <person name="Schroeter R."/>
            <person name="Scoffone F."/>
            <person name="Sekiguchi J."/>
            <person name="Sekowska A."/>
            <person name="Seror S.J."/>
            <person name="Serror P."/>
            <person name="Shin B.-S."/>
            <person name="Soldo B."/>
            <person name="Sorokin A."/>
            <person name="Tacconi E."/>
            <person name="Takagi T."/>
            <person name="Takahashi H."/>
            <person name="Takemaru K."/>
            <person name="Takeuchi M."/>
            <person name="Tamakoshi A."/>
            <person name="Tanaka T."/>
            <person name="Terpstra P."/>
            <person name="Tognoni A."/>
            <person name="Tosato V."/>
            <person name="Uchiyama S."/>
            <person name="Vandenbol M."/>
            <person name="Vannier F."/>
            <person name="Vassarotti A."/>
            <person name="Viari A."/>
            <person name="Wambutt R."/>
            <person name="Wedler E."/>
            <person name="Wedler H."/>
            <person name="Weitzenegger T."/>
            <person name="Winters P."/>
            <person name="Wipat A."/>
            <person name="Yamamoto H."/>
            <person name="Yamane K."/>
            <person name="Yasumoto K."/>
            <person name="Yata K."/>
            <person name="Yoshida K."/>
            <person name="Yoshikawa H.-F."/>
            <person name="Zumstein E."/>
            <person name="Yoshikawa H."/>
            <person name="Danchin A."/>
        </authorList>
    </citation>
    <scope>NUCLEOTIDE SEQUENCE [LARGE SCALE GENOMIC DNA]</scope>
    <source>
        <strain>168</strain>
    </source>
</reference>
<organism>
    <name type="scientific">Bacillus subtilis (strain 168)</name>
    <dbReference type="NCBI Taxonomy" id="224308"/>
    <lineage>
        <taxon>Bacteria</taxon>
        <taxon>Bacillati</taxon>
        <taxon>Bacillota</taxon>
        <taxon>Bacilli</taxon>
        <taxon>Bacillales</taxon>
        <taxon>Bacillaceae</taxon>
        <taxon>Bacillus</taxon>
    </lineage>
</organism>
<proteinExistence type="inferred from homology"/>
<dbReference type="EMBL" id="Z18631">
    <property type="protein sequence ID" value="CAA79236.1"/>
    <property type="molecule type" value="Genomic_DNA"/>
</dbReference>
<dbReference type="EMBL" id="AL009126">
    <property type="protein sequence ID" value="CAB13538.1"/>
    <property type="molecule type" value="Genomic_DNA"/>
</dbReference>
<dbReference type="PIR" id="G36905">
    <property type="entry name" value="G36905"/>
</dbReference>
<dbReference type="RefSeq" id="NP_389547.1">
    <property type="nucleotide sequence ID" value="NC_000964.3"/>
</dbReference>
<dbReference type="RefSeq" id="WP_009967251.1">
    <property type="nucleotide sequence ID" value="NZ_OZ025638.1"/>
</dbReference>
<dbReference type="SMR" id="P32731"/>
<dbReference type="FunCoup" id="P32731">
    <property type="interactions" value="512"/>
</dbReference>
<dbReference type="STRING" id="224308.BSU16650"/>
<dbReference type="PaxDb" id="224308-BSU16650"/>
<dbReference type="EnsemblBacteria" id="CAB13538">
    <property type="protein sequence ID" value="CAB13538"/>
    <property type="gene ID" value="BSU_16650"/>
</dbReference>
<dbReference type="GeneID" id="86873825"/>
<dbReference type="GeneID" id="939635"/>
<dbReference type="KEGG" id="bsu:BSU16650"/>
<dbReference type="PATRIC" id="fig|224308.179.peg.1806"/>
<dbReference type="eggNOG" id="COG0858">
    <property type="taxonomic scope" value="Bacteria"/>
</dbReference>
<dbReference type="InParanoid" id="P32731"/>
<dbReference type="OrthoDB" id="307788at2"/>
<dbReference type="PhylomeDB" id="P32731"/>
<dbReference type="BioCyc" id="BSUB:BSU16650-MONOMER"/>
<dbReference type="Proteomes" id="UP000001570">
    <property type="component" value="Chromosome"/>
</dbReference>
<dbReference type="GO" id="GO:0005829">
    <property type="term" value="C:cytosol"/>
    <property type="evidence" value="ECO:0000318"/>
    <property type="project" value="GO_Central"/>
</dbReference>
<dbReference type="GO" id="GO:0043024">
    <property type="term" value="F:ribosomal small subunit binding"/>
    <property type="evidence" value="ECO:0000318"/>
    <property type="project" value="GO_Central"/>
</dbReference>
<dbReference type="GO" id="GO:0030490">
    <property type="term" value="P:maturation of SSU-rRNA"/>
    <property type="evidence" value="ECO:0007669"/>
    <property type="project" value="UniProtKB-UniRule"/>
</dbReference>
<dbReference type="GO" id="GO:0042254">
    <property type="term" value="P:ribosome biogenesis"/>
    <property type="evidence" value="ECO:0000318"/>
    <property type="project" value="GO_Central"/>
</dbReference>
<dbReference type="FunFam" id="3.30.300.20:FF:000009">
    <property type="entry name" value="Ribosome-binding factor A"/>
    <property type="match status" value="1"/>
</dbReference>
<dbReference type="Gene3D" id="3.30.300.20">
    <property type="match status" value="1"/>
</dbReference>
<dbReference type="HAMAP" id="MF_00003">
    <property type="entry name" value="RbfA"/>
    <property type="match status" value="1"/>
</dbReference>
<dbReference type="InterPro" id="IPR015946">
    <property type="entry name" value="KH_dom-like_a/b"/>
</dbReference>
<dbReference type="InterPro" id="IPR000238">
    <property type="entry name" value="RbfA"/>
</dbReference>
<dbReference type="InterPro" id="IPR023799">
    <property type="entry name" value="RbfA_dom_sf"/>
</dbReference>
<dbReference type="InterPro" id="IPR020053">
    <property type="entry name" value="Ribosome-bd_factorA_CS"/>
</dbReference>
<dbReference type="NCBIfam" id="TIGR00082">
    <property type="entry name" value="rbfA"/>
    <property type="match status" value="1"/>
</dbReference>
<dbReference type="PANTHER" id="PTHR33515">
    <property type="entry name" value="RIBOSOME-BINDING FACTOR A, CHLOROPLASTIC-RELATED"/>
    <property type="match status" value="1"/>
</dbReference>
<dbReference type="PANTHER" id="PTHR33515:SF1">
    <property type="entry name" value="RIBOSOME-BINDING FACTOR A, CHLOROPLASTIC-RELATED"/>
    <property type="match status" value="1"/>
</dbReference>
<dbReference type="Pfam" id="PF02033">
    <property type="entry name" value="RBFA"/>
    <property type="match status" value="1"/>
</dbReference>
<dbReference type="SUPFAM" id="SSF89919">
    <property type="entry name" value="Ribosome-binding factor A, RbfA"/>
    <property type="match status" value="1"/>
</dbReference>
<dbReference type="PROSITE" id="PS01319">
    <property type="entry name" value="RBFA"/>
    <property type="match status" value="1"/>
</dbReference>